<evidence type="ECO:0000255" key="1">
    <source>
        <dbReference type="HAMAP-Rule" id="MF_01536"/>
    </source>
</evidence>
<feature type="chain" id="PRO_1000215409" description="UPF0344 protein GWCH70_0687">
    <location>
        <begin position="1"/>
        <end position="117"/>
    </location>
</feature>
<feature type="transmembrane region" description="Helical" evidence="1">
    <location>
        <begin position="2"/>
        <end position="22"/>
    </location>
</feature>
<feature type="transmembrane region" description="Helical" evidence="1">
    <location>
        <begin position="32"/>
        <end position="52"/>
    </location>
</feature>
<feature type="transmembrane region" description="Helical" evidence="1">
    <location>
        <begin position="55"/>
        <end position="75"/>
    </location>
</feature>
<feature type="transmembrane region" description="Helical" evidence="1">
    <location>
        <begin position="97"/>
        <end position="117"/>
    </location>
</feature>
<organism>
    <name type="scientific">Geobacillus sp. (strain WCH70)</name>
    <dbReference type="NCBI Taxonomy" id="471223"/>
    <lineage>
        <taxon>Bacteria</taxon>
        <taxon>Bacillati</taxon>
        <taxon>Bacillota</taxon>
        <taxon>Bacilli</taxon>
        <taxon>Bacillales</taxon>
        <taxon>Anoxybacillaceae</taxon>
        <taxon>Geobacillus</taxon>
    </lineage>
</organism>
<sequence>MTHAHITSWLITVILFFIAVSLQRSGASKAKIVQMALRLFYIFTVITGGLLLHSIASISILYIIKAIVGLWLIGAMEMVLSGMKKGKNTNVAWIQWIVAFVLVLFLGFMLPLGFDLF</sequence>
<keyword id="KW-1003">Cell membrane</keyword>
<keyword id="KW-0472">Membrane</keyword>
<keyword id="KW-0812">Transmembrane</keyword>
<keyword id="KW-1133">Transmembrane helix</keyword>
<gene>
    <name type="ordered locus">GWCH70_0687</name>
</gene>
<dbReference type="EMBL" id="CP001638">
    <property type="protein sequence ID" value="ACS23580.1"/>
    <property type="molecule type" value="Genomic_DNA"/>
</dbReference>
<dbReference type="STRING" id="471223.GWCH70_0687"/>
<dbReference type="KEGG" id="gwc:GWCH70_0687"/>
<dbReference type="eggNOG" id="ENOG5032W2Q">
    <property type="taxonomic scope" value="Bacteria"/>
</dbReference>
<dbReference type="HOGENOM" id="CLU_146641_1_1_9"/>
<dbReference type="OrthoDB" id="2365314at2"/>
<dbReference type="GO" id="GO:0005886">
    <property type="term" value="C:plasma membrane"/>
    <property type="evidence" value="ECO:0007669"/>
    <property type="project" value="UniProtKB-SubCell"/>
</dbReference>
<dbReference type="HAMAP" id="MF_01536">
    <property type="entry name" value="UPF0344"/>
    <property type="match status" value="1"/>
</dbReference>
<dbReference type="InterPro" id="IPR010899">
    <property type="entry name" value="UPF0344"/>
</dbReference>
<dbReference type="NCBIfam" id="NF010196">
    <property type="entry name" value="PRK13673.1-3"/>
    <property type="match status" value="1"/>
</dbReference>
<dbReference type="Pfam" id="PF07457">
    <property type="entry name" value="DUF1516"/>
    <property type="match status" value="1"/>
</dbReference>
<name>Y687_GEOSW</name>
<protein>
    <recommendedName>
        <fullName evidence="1">UPF0344 protein GWCH70_0687</fullName>
    </recommendedName>
</protein>
<comment type="subcellular location">
    <subcellularLocation>
        <location evidence="1">Cell membrane</location>
        <topology evidence="1">Multi-pass membrane protein</topology>
    </subcellularLocation>
</comment>
<comment type="similarity">
    <text evidence="1">Belongs to the UPF0344 family.</text>
</comment>
<accession>C5D6R3</accession>
<proteinExistence type="inferred from homology"/>
<reference key="1">
    <citation type="submission" date="2009-06" db="EMBL/GenBank/DDBJ databases">
        <title>Complete sequence of chromosome of Geopacillus sp. WCH70.</title>
        <authorList>
            <consortium name="US DOE Joint Genome Institute"/>
            <person name="Lucas S."/>
            <person name="Copeland A."/>
            <person name="Lapidus A."/>
            <person name="Glavina del Rio T."/>
            <person name="Dalin E."/>
            <person name="Tice H."/>
            <person name="Bruce D."/>
            <person name="Goodwin L."/>
            <person name="Pitluck S."/>
            <person name="Chertkov O."/>
            <person name="Brettin T."/>
            <person name="Detter J.C."/>
            <person name="Han C."/>
            <person name="Larimer F."/>
            <person name="Land M."/>
            <person name="Hauser L."/>
            <person name="Kyrpides N."/>
            <person name="Mikhailova N."/>
            <person name="Brumm P."/>
            <person name="Mead D.A."/>
            <person name="Richardson P."/>
        </authorList>
    </citation>
    <scope>NUCLEOTIDE SEQUENCE [LARGE SCALE GENOMIC DNA]</scope>
    <source>
        <strain>WCH70</strain>
    </source>
</reference>